<evidence type="ECO:0000250" key="1"/>
<evidence type="ECO:0000255" key="2">
    <source>
        <dbReference type="PROSITE-ProRule" id="PRU00316"/>
    </source>
</evidence>
<evidence type="ECO:0000303" key="3">
    <source ref="1"/>
</evidence>
<evidence type="ECO:0000305" key="4"/>
<keyword id="KW-0025">Alternative splicing</keyword>
<keyword id="KW-1185">Reference proteome</keyword>
<comment type="function">
    <text evidence="1">May play a role in the development of the central system.</text>
</comment>
<comment type="alternative products">
    <event type="alternative splicing"/>
    <isoform>
        <id>A4QNW7-1</id>
        <name>1</name>
        <sequence type="displayed"/>
    </isoform>
    <isoform>
        <id>A4QNW7-2</id>
        <name>2</name>
        <sequence type="described" ref="VSP_034073"/>
    </isoform>
</comment>
<comment type="similarity">
    <text evidence="4">Belongs to the PHYHIP family.</text>
</comment>
<accession>A4QNW7</accession>
<accession>Q641M5</accession>
<sequence>MEVPRVGHSISSPTSPCEDMMKNLSLDAIQLCEREGNKSLDSGIAEMEELPVPQNIKISNITCDSFKICWDMDSRSKERITHYFIDLNKKENKNANKFKHKDVPTKLVAKAVPLPMTVRGHWFLSPRTEYTVAVQTASKQGDGDYAVSEWSEINEFCTADYSTVHLTQLMEKAEVIAGRMLRFSVFYRNQHKEYFDHAREAQNNKMLPSVKDNSGSHGSPISGKLEGIFFSCNTEFNTGKPPQDSPYGRYRYQLPAEALFSPKTNLYFGDFYCMYTAYHYVILVIAPQGSPGDDFCKQRLPALDIANNRFMTCSEDEDGQLVFHHAQDLILEVIYTDPVDLSLGTVAEISGHQLMSLSTVNAKKDPSCKTCNISVGR</sequence>
<protein>
    <recommendedName>
        <fullName>Phytanoyl-CoA hydroxylase-interacting protein-like</fullName>
    </recommendedName>
</protein>
<organism>
    <name type="scientific">Danio rerio</name>
    <name type="common">Zebrafish</name>
    <name type="synonym">Brachydanio rerio</name>
    <dbReference type="NCBI Taxonomy" id="7955"/>
    <lineage>
        <taxon>Eukaryota</taxon>
        <taxon>Metazoa</taxon>
        <taxon>Chordata</taxon>
        <taxon>Craniata</taxon>
        <taxon>Vertebrata</taxon>
        <taxon>Euteleostomi</taxon>
        <taxon>Actinopterygii</taxon>
        <taxon>Neopterygii</taxon>
        <taxon>Teleostei</taxon>
        <taxon>Ostariophysi</taxon>
        <taxon>Cypriniformes</taxon>
        <taxon>Danionidae</taxon>
        <taxon>Danioninae</taxon>
        <taxon>Danio</taxon>
    </lineage>
</organism>
<gene>
    <name type="primary">phyhipl</name>
    <name type="ORF">zgc:100983</name>
</gene>
<proteinExistence type="evidence at transcript level"/>
<dbReference type="EMBL" id="BC082295">
    <property type="protein sequence ID" value="AAH82295.1"/>
    <property type="molecule type" value="mRNA"/>
</dbReference>
<dbReference type="EMBL" id="BC139549">
    <property type="protein sequence ID" value="AAI39550.1"/>
    <property type="molecule type" value="mRNA"/>
</dbReference>
<dbReference type="RefSeq" id="NP_001005602.2">
    <property type="nucleotide sequence ID" value="NM_001005602.2"/>
</dbReference>
<dbReference type="SMR" id="A4QNW7"/>
<dbReference type="FunCoup" id="A4QNW7">
    <property type="interactions" value="915"/>
</dbReference>
<dbReference type="PaxDb" id="7955-ENSDARP00000094312"/>
<dbReference type="Ensembl" id="ENSDART00000103536">
    <molecule id="A4QNW7-1"/>
    <property type="protein sequence ID" value="ENSDARP00000094312"/>
    <property type="gene ID" value="ENSDARG00000070498"/>
</dbReference>
<dbReference type="GeneID" id="100004913"/>
<dbReference type="KEGG" id="dre:100004913"/>
<dbReference type="AGR" id="ZFIN:ZDB-GENE-040927-27"/>
<dbReference type="CTD" id="100004913"/>
<dbReference type="ZFIN" id="ZDB-GENE-040927-27">
    <property type="gene designation" value="phyhiplb"/>
</dbReference>
<dbReference type="eggNOG" id="ENOG502QQIT">
    <property type="taxonomic scope" value="Eukaryota"/>
</dbReference>
<dbReference type="HOGENOM" id="CLU_054218_1_0_1"/>
<dbReference type="InParanoid" id="A4QNW7"/>
<dbReference type="OMA" id="CCNTEFN"/>
<dbReference type="OrthoDB" id="6101761at2759"/>
<dbReference type="PhylomeDB" id="A4QNW7"/>
<dbReference type="TreeFam" id="TF314485"/>
<dbReference type="PRO" id="PR:A4QNW7"/>
<dbReference type="Proteomes" id="UP000000437">
    <property type="component" value="Chromosome 12"/>
</dbReference>
<dbReference type="Bgee" id="ENSDARG00000070498">
    <property type="expression patterns" value="Expressed in retina and 26 other cell types or tissues"/>
</dbReference>
<dbReference type="ExpressionAtlas" id="A4QNW7">
    <property type="expression patterns" value="baseline"/>
</dbReference>
<dbReference type="GO" id="GO:0005737">
    <property type="term" value="C:cytoplasm"/>
    <property type="evidence" value="ECO:0000318"/>
    <property type="project" value="GO_Central"/>
</dbReference>
<dbReference type="CDD" id="cd00063">
    <property type="entry name" value="FN3"/>
    <property type="match status" value="1"/>
</dbReference>
<dbReference type="FunFam" id="2.60.40.10:FF:000277">
    <property type="entry name" value="Phytanoyl-CoA hydroxylase-interacting protein-like protein"/>
    <property type="match status" value="1"/>
</dbReference>
<dbReference type="Gene3D" id="2.60.40.10">
    <property type="entry name" value="Immunoglobulins"/>
    <property type="match status" value="1"/>
</dbReference>
<dbReference type="InterPro" id="IPR003961">
    <property type="entry name" value="FN3_dom"/>
</dbReference>
<dbReference type="InterPro" id="IPR036116">
    <property type="entry name" value="FN3_sf"/>
</dbReference>
<dbReference type="InterPro" id="IPR013783">
    <property type="entry name" value="Ig-like_fold"/>
</dbReference>
<dbReference type="InterPro" id="IPR042868">
    <property type="entry name" value="PHYHIP/PHYHIPL"/>
</dbReference>
<dbReference type="InterPro" id="IPR045545">
    <property type="entry name" value="PHYIP/PHIPL_C"/>
</dbReference>
<dbReference type="PANTHER" id="PTHR15698:SF8">
    <property type="entry name" value="PHYTANOYL-COA HYDROXYLASE-INTERACTING PROTEIN-LIKE"/>
    <property type="match status" value="1"/>
</dbReference>
<dbReference type="PANTHER" id="PTHR15698">
    <property type="entry name" value="PROTEIN CBG15099"/>
    <property type="match status" value="1"/>
</dbReference>
<dbReference type="Pfam" id="PF00041">
    <property type="entry name" value="fn3"/>
    <property type="match status" value="1"/>
</dbReference>
<dbReference type="Pfam" id="PF19281">
    <property type="entry name" value="PHYHIP_C"/>
    <property type="match status" value="1"/>
</dbReference>
<dbReference type="SMART" id="SM00060">
    <property type="entry name" value="FN3"/>
    <property type="match status" value="1"/>
</dbReference>
<dbReference type="SUPFAM" id="SSF49265">
    <property type="entry name" value="Fibronectin type III"/>
    <property type="match status" value="1"/>
</dbReference>
<dbReference type="PROSITE" id="PS50853">
    <property type="entry name" value="FN3"/>
    <property type="match status" value="1"/>
</dbReference>
<name>PHIPL_DANRE</name>
<reference key="1">
    <citation type="submission" date="2007-04" db="EMBL/GenBank/DDBJ databases">
        <authorList>
            <consortium name="NIH - Zebrafish Gene Collection (ZGC) project"/>
        </authorList>
    </citation>
    <scope>NUCLEOTIDE SEQUENCE [LARGE SCALE MRNA] (ISOFORMS 1 AND 2)</scope>
    <source>
        <tissue>Embryo</tissue>
        <tissue>Testis</tissue>
    </source>
</reference>
<feature type="chain" id="PRO_0000338644" description="Phytanoyl-CoA hydroxylase-interacting protein-like">
    <location>
        <begin position="1"/>
        <end position="377"/>
    </location>
</feature>
<feature type="domain" description="Fibronectin type-III" evidence="2">
    <location>
        <begin position="52"/>
        <end position="161"/>
    </location>
</feature>
<feature type="splice variant" id="VSP_034073" description="In isoform 2." evidence="3">
    <location>
        <begin position="1"/>
        <end position="46"/>
    </location>
</feature>
<feature type="sequence conflict" description="In Ref. 1; AAH82295." evidence="4" ref="1">
    <original>K</original>
    <variation>R</variation>
    <location>
        <position position="192"/>
    </location>
</feature>